<reference key="1">
    <citation type="journal article" date="2003" name="Proc. Natl. Acad. Sci. U.S.A.">
        <title>Complete genome sequence of the Q-fever pathogen, Coxiella burnetii.</title>
        <authorList>
            <person name="Seshadri R."/>
            <person name="Paulsen I.T."/>
            <person name="Eisen J.A."/>
            <person name="Read T.D."/>
            <person name="Nelson K.E."/>
            <person name="Nelson W.C."/>
            <person name="Ward N.L."/>
            <person name="Tettelin H."/>
            <person name="Davidsen T.M."/>
            <person name="Beanan M.J."/>
            <person name="DeBoy R.T."/>
            <person name="Daugherty S.C."/>
            <person name="Brinkac L.M."/>
            <person name="Madupu R."/>
            <person name="Dodson R.J."/>
            <person name="Khouri H.M."/>
            <person name="Lee K.H."/>
            <person name="Carty H.A."/>
            <person name="Scanlan D."/>
            <person name="Heinzen R.A."/>
            <person name="Thompson H.A."/>
            <person name="Samuel J.E."/>
            <person name="Fraser C.M."/>
            <person name="Heidelberg J.F."/>
        </authorList>
    </citation>
    <scope>NUCLEOTIDE SEQUENCE [LARGE SCALE GENOMIC DNA]</scope>
    <source>
        <strain>RSA 493 / Nine Mile phase I</strain>
    </source>
</reference>
<feature type="chain" id="PRO_0000358975" description="Acetyl-coenzyme A carboxylase carboxyl transferase subunit beta">
    <location>
        <begin position="1"/>
        <end position="291"/>
    </location>
</feature>
<feature type="domain" description="CoA carboxyltransferase N-terminal" evidence="2">
    <location>
        <begin position="23"/>
        <end position="291"/>
    </location>
</feature>
<feature type="zinc finger region" description="C4-type" evidence="1">
    <location>
        <begin position="27"/>
        <end position="49"/>
    </location>
</feature>
<feature type="binding site" evidence="1">
    <location>
        <position position="27"/>
    </location>
    <ligand>
        <name>Zn(2+)</name>
        <dbReference type="ChEBI" id="CHEBI:29105"/>
    </ligand>
</feature>
<feature type="binding site" evidence="1">
    <location>
        <position position="30"/>
    </location>
    <ligand>
        <name>Zn(2+)</name>
        <dbReference type="ChEBI" id="CHEBI:29105"/>
    </ligand>
</feature>
<feature type="binding site" evidence="1">
    <location>
        <position position="46"/>
    </location>
    <ligand>
        <name>Zn(2+)</name>
        <dbReference type="ChEBI" id="CHEBI:29105"/>
    </ligand>
</feature>
<feature type="binding site" evidence="1">
    <location>
        <position position="49"/>
    </location>
    <ligand>
        <name>Zn(2+)</name>
        <dbReference type="ChEBI" id="CHEBI:29105"/>
    </ligand>
</feature>
<dbReference type="EC" id="2.1.3.15" evidence="1"/>
<dbReference type="EMBL" id="AE016828">
    <property type="protein sequence ID" value="AAO90422.1"/>
    <property type="molecule type" value="Genomic_DNA"/>
</dbReference>
<dbReference type="RefSeq" id="NP_819908.1">
    <property type="nucleotide sequence ID" value="NC_002971.4"/>
</dbReference>
<dbReference type="RefSeq" id="WP_010957871.1">
    <property type="nucleotide sequence ID" value="NC_002971.4"/>
</dbReference>
<dbReference type="SMR" id="Q83D51"/>
<dbReference type="STRING" id="227377.CBU_0893"/>
<dbReference type="DNASU" id="1208786"/>
<dbReference type="EnsemblBacteria" id="AAO90422">
    <property type="protein sequence ID" value="AAO90422"/>
    <property type="gene ID" value="CBU_0893"/>
</dbReference>
<dbReference type="GeneID" id="1208786"/>
<dbReference type="KEGG" id="cbu:CBU_0893"/>
<dbReference type="PATRIC" id="fig|227377.7.peg.880"/>
<dbReference type="eggNOG" id="COG0777">
    <property type="taxonomic scope" value="Bacteria"/>
</dbReference>
<dbReference type="HOGENOM" id="CLU_015486_1_0_6"/>
<dbReference type="OrthoDB" id="9772975at2"/>
<dbReference type="UniPathway" id="UPA00655">
    <property type="reaction ID" value="UER00711"/>
</dbReference>
<dbReference type="Proteomes" id="UP000002671">
    <property type="component" value="Chromosome"/>
</dbReference>
<dbReference type="GO" id="GO:0009329">
    <property type="term" value="C:acetate CoA-transferase complex"/>
    <property type="evidence" value="ECO:0000318"/>
    <property type="project" value="GO_Central"/>
</dbReference>
<dbReference type="GO" id="GO:0003989">
    <property type="term" value="F:acetyl-CoA carboxylase activity"/>
    <property type="evidence" value="ECO:0007669"/>
    <property type="project" value="InterPro"/>
</dbReference>
<dbReference type="GO" id="GO:0005524">
    <property type="term" value="F:ATP binding"/>
    <property type="evidence" value="ECO:0007669"/>
    <property type="project" value="UniProtKB-KW"/>
</dbReference>
<dbReference type="GO" id="GO:0016743">
    <property type="term" value="F:carboxyl- or carbamoyltransferase activity"/>
    <property type="evidence" value="ECO:0007669"/>
    <property type="project" value="UniProtKB-UniRule"/>
</dbReference>
<dbReference type="GO" id="GO:0008270">
    <property type="term" value="F:zinc ion binding"/>
    <property type="evidence" value="ECO:0007669"/>
    <property type="project" value="UniProtKB-UniRule"/>
</dbReference>
<dbReference type="GO" id="GO:0006633">
    <property type="term" value="P:fatty acid biosynthetic process"/>
    <property type="evidence" value="ECO:0000318"/>
    <property type="project" value="GO_Central"/>
</dbReference>
<dbReference type="GO" id="GO:2001295">
    <property type="term" value="P:malonyl-CoA biosynthetic process"/>
    <property type="evidence" value="ECO:0000318"/>
    <property type="project" value="GO_Central"/>
</dbReference>
<dbReference type="GO" id="GO:0017148">
    <property type="term" value="P:negative regulation of translation"/>
    <property type="evidence" value="ECO:0000318"/>
    <property type="project" value="GO_Central"/>
</dbReference>
<dbReference type="Gene3D" id="3.90.226.10">
    <property type="entry name" value="2-enoyl-CoA Hydratase, Chain A, domain 1"/>
    <property type="match status" value="1"/>
</dbReference>
<dbReference type="HAMAP" id="MF_01395">
    <property type="entry name" value="AcetylCoA_CT_beta"/>
    <property type="match status" value="1"/>
</dbReference>
<dbReference type="InterPro" id="IPR034733">
    <property type="entry name" value="AcCoA_carboxyl_beta"/>
</dbReference>
<dbReference type="InterPro" id="IPR000438">
    <property type="entry name" value="Acetyl_CoA_COase_Trfase_b_su"/>
</dbReference>
<dbReference type="InterPro" id="IPR029045">
    <property type="entry name" value="ClpP/crotonase-like_dom_sf"/>
</dbReference>
<dbReference type="InterPro" id="IPR011762">
    <property type="entry name" value="COA_CT_N"/>
</dbReference>
<dbReference type="InterPro" id="IPR041010">
    <property type="entry name" value="Znf-ACC"/>
</dbReference>
<dbReference type="NCBIfam" id="TIGR00515">
    <property type="entry name" value="accD"/>
    <property type="match status" value="1"/>
</dbReference>
<dbReference type="PANTHER" id="PTHR42995">
    <property type="entry name" value="ACETYL-COENZYME A CARBOXYLASE CARBOXYL TRANSFERASE SUBUNIT BETA, CHLOROPLASTIC"/>
    <property type="match status" value="1"/>
</dbReference>
<dbReference type="PANTHER" id="PTHR42995:SF5">
    <property type="entry name" value="ACETYL-COENZYME A CARBOXYLASE CARBOXYL TRANSFERASE SUBUNIT BETA, CHLOROPLASTIC"/>
    <property type="match status" value="1"/>
</dbReference>
<dbReference type="Pfam" id="PF01039">
    <property type="entry name" value="Carboxyl_trans"/>
    <property type="match status" value="1"/>
</dbReference>
<dbReference type="Pfam" id="PF17848">
    <property type="entry name" value="Zn_ribbon_ACC"/>
    <property type="match status" value="1"/>
</dbReference>
<dbReference type="PRINTS" id="PR01070">
    <property type="entry name" value="ACCCTRFRASEB"/>
</dbReference>
<dbReference type="SUPFAM" id="SSF52096">
    <property type="entry name" value="ClpP/crotonase"/>
    <property type="match status" value="1"/>
</dbReference>
<dbReference type="PROSITE" id="PS50980">
    <property type="entry name" value="COA_CT_NTER"/>
    <property type="match status" value="1"/>
</dbReference>
<protein>
    <recommendedName>
        <fullName evidence="1">Acetyl-coenzyme A carboxylase carboxyl transferase subunit beta</fullName>
        <shortName evidence="1">ACCase subunit beta</shortName>
        <shortName evidence="1">Acetyl-CoA carboxylase carboxyltransferase subunit beta</shortName>
        <ecNumber evidence="1">2.1.3.15</ecNumber>
    </recommendedName>
</protein>
<keyword id="KW-0067">ATP-binding</keyword>
<keyword id="KW-0963">Cytoplasm</keyword>
<keyword id="KW-0275">Fatty acid biosynthesis</keyword>
<keyword id="KW-0276">Fatty acid metabolism</keyword>
<keyword id="KW-0444">Lipid biosynthesis</keyword>
<keyword id="KW-0443">Lipid metabolism</keyword>
<keyword id="KW-0479">Metal-binding</keyword>
<keyword id="KW-0547">Nucleotide-binding</keyword>
<keyword id="KW-1185">Reference proteome</keyword>
<keyword id="KW-0808">Transferase</keyword>
<keyword id="KW-0862">Zinc</keyword>
<keyword id="KW-0863">Zinc-finger</keyword>
<comment type="function">
    <text evidence="1">Component of the acetyl coenzyme A carboxylase (ACC) complex. Biotin carboxylase (BC) catalyzes the carboxylation of biotin on its carrier protein (BCCP) and then the CO(2) group is transferred by the transcarboxylase to acetyl-CoA to form malonyl-CoA.</text>
</comment>
<comment type="catalytic activity">
    <reaction evidence="1">
        <text>N(6)-carboxybiotinyl-L-lysyl-[protein] + acetyl-CoA = N(6)-biotinyl-L-lysyl-[protein] + malonyl-CoA</text>
        <dbReference type="Rhea" id="RHEA:54728"/>
        <dbReference type="Rhea" id="RHEA-COMP:10505"/>
        <dbReference type="Rhea" id="RHEA-COMP:10506"/>
        <dbReference type="ChEBI" id="CHEBI:57288"/>
        <dbReference type="ChEBI" id="CHEBI:57384"/>
        <dbReference type="ChEBI" id="CHEBI:83144"/>
        <dbReference type="ChEBI" id="CHEBI:83145"/>
        <dbReference type="EC" id="2.1.3.15"/>
    </reaction>
</comment>
<comment type="cofactor">
    <cofactor evidence="1">
        <name>Zn(2+)</name>
        <dbReference type="ChEBI" id="CHEBI:29105"/>
    </cofactor>
    <text evidence="1">Binds 1 zinc ion per subunit.</text>
</comment>
<comment type="pathway">
    <text evidence="1">Lipid metabolism; malonyl-CoA biosynthesis; malonyl-CoA from acetyl-CoA: step 1/1.</text>
</comment>
<comment type="subunit">
    <text evidence="1">Acetyl-CoA carboxylase is a heterohexamer composed of biotin carboxyl carrier protein (AccB), biotin carboxylase (AccC) and two subunits each of ACCase subunit alpha (AccA) and ACCase subunit beta (AccD).</text>
</comment>
<comment type="subcellular location">
    <subcellularLocation>
        <location evidence="1">Cytoplasm</location>
    </subcellularLocation>
</comment>
<comment type="similarity">
    <text evidence="1">Belongs to the AccD/PCCB family.</text>
</comment>
<proteinExistence type="inferred from homology"/>
<organism>
    <name type="scientific">Coxiella burnetii (strain RSA 493 / Nine Mile phase I)</name>
    <dbReference type="NCBI Taxonomy" id="227377"/>
    <lineage>
        <taxon>Bacteria</taxon>
        <taxon>Pseudomonadati</taxon>
        <taxon>Pseudomonadota</taxon>
        <taxon>Gammaproteobacteria</taxon>
        <taxon>Legionellales</taxon>
        <taxon>Coxiellaceae</taxon>
        <taxon>Coxiella</taxon>
    </lineage>
</organism>
<name>ACCD_COXBU</name>
<sequence length="291" mass="32231">MNWFTKLLPKISTANKKGVPEGVWHKCPSCTAVLYRVELERNLEVCPKCYYHIRLDPRKRLAQFLDEGEQEELAEDILPVDRLKFRDSKKYKDRLSAAQKATEEKEALVVYKGNIYGNPIVAAAFNFFFVGGSMGAAVGERFAAGVEAAISERLPFVCFSTSGGARMQEGLFSLFQMAKTSAVLARLAEYKLPYISVLTDPTMGGVSASLAMLGDVIIAEPNALIGFSGPRVIEQTIRQTLPEGFQRSEFLLEHGAIDMVVDRRELKSTIASLITKLTHQPPPDLPVEESV</sequence>
<accession>Q83D51</accession>
<evidence type="ECO:0000255" key="1">
    <source>
        <dbReference type="HAMAP-Rule" id="MF_01395"/>
    </source>
</evidence>
<evidence type="ECO:0000255" key="2">
    <source>
        <dbReference type="PROSITE-ProRule" id="PRU01136"/>
    </source>
</evidence>
<gene>
    <name evidence="1" type="primary">accD</name>
    <name type="ordered locus">CBU_0893</name>
</gene>